<evidence type="ECO:0000255" key="1">
    <source>
        <dbReference type="HAMAP-Rule" id="MF_01554"/>
    </source>
</evidence>
<proteinExistence type="inferred from homology"/>
<keyword id="KW-0413">Isomerase</keyword>
<keyword id="KW-0460">Magnesium</keyword>
<keyword id="KW-0479">Metal-binding</keyword>
<keyword id="KW-0597">Phosphoprotein</keyword>
<keyword id="KW-1185">Reference proteome</keyword>
<sequence length="446" mass="49498">MKLFGTDGVRGKAGNFLTAELALRLAMAAGVYFRKNSLTNMILVGKDTRRSGYMIETAIVAGLTSVGFNVRQIGPMPTPAVAFLTEDMRCDAGIMISASHNPYYDNGIKFFDRTGFKLDEKEEAEIEKIYFSDKIINEARKQMMEIGTAKRVDDVIGRYIVHIKNSFPRSETLHNLRVVIDTANGASYKVAPTIFKELGAETIVLANEPNGKNINENCGALFPQNLANEVRRLRADVGFAFDGDADRLVVVDENGEIIHGDILLGILASYLKESGELANDKIVATVMSNKALDDFLAKIGISVIRTNVGDKFVLEKMREIGSNFGGEQSGHVIFGSFAKTGDGIVSALQFSACMIKMHKKSSEISKMIKPYPQILRNLKIKNKKPLDKIKGLDEFEKNIQKDGIRTLFRYSGTENLIRLLLEGKNEKLLNKKMDEAEEFFSKALND</sequence>
<dbReference type="EC" id="5.4.2.10" evidence="1"/>
<dbReference type="EMBL" id="CP000776">
    <property type="protein sequence ID" value="ABS52166.1"/>
    <property type="molecule type" value="Genomic_DNA"/>
</dbReference>
<dbReference type="RefSeq" id="WP_012109606.1">
    <property type="nucleotide sequence ID" value="NC_009714.1"/>
</dbReference>
<dbReference type="SMR" id="A7I458"/>
<dbReference type="STRING" id="360107.CHAB381_1789"/>
<dbReference type="KEGG" id="cha:CHAB381_1789"/>
<dbReference type="eggNOG" id="COG1109">
    <property type="taxonomic scope" value="Bacteria"/>
</dbReference>
<dbReference type="HOGENOM" id="CLU_016950_7_0_7"/>
<dbReference type="OrthoDB" id="9806956at2"/>
<dbReference type="Proteomes" id="UP000002407">
    <property type="component" value="Chromosome"/>
</dbReference>
<dbReference type="GO" id="GO:0005829">
    <property type="term" value="C:cytosol"/>
    <property type="evidence" value="ECO:0007669"/>
    <property type="project" value="TreeGrafter"/>
</dbReference>
<dbReference type="GO" id="GO:0000287">
    <property type="term" value="F:magnesium ion binding"/>
    <property type="evidence" value="ECO:0007669"/>
    <property type="project" value="UniProtKB-UniRule"/>
</dbReference>
<dbReference type="GO" id="GO:0008966">
    <property type="term" value="F:phosphoglucosamine mutase activity"/>
    <property type="evidence" value="ECO:0007669"/>
    <property type="project" value="UniProtKB-UniRule"/>
</dbReference>
<dbReference type="GO" id="GO:0004615">
    <property type="term" value="F:phosphomannomutase activity"/>
    <property type="evidence" value="ECO:0007669"/>
    <property type="project" value="TreeGrafter"/>
</dbReference>
<dbReference type="GO" id="GO:0005975">
    <property type="term" value="P:carbohydrate metabolic process"/>
    <property type="evidence" value="ECO:0007669"/>
    <property type="project" value="InterPro"/>
</dbReference>
<dbReference type="GO" id="GO:0009252">
    <property type="term" value="P:peptidoglycan biosynthetic process"/>
    <property type="evidence" value="ECO:0007669"/>
    <property type="project" value="TreeGrafter"/>
</dbReference>
<dbReference type="GO" id="GO:0006048">
    <property type="term" value="P:UDP-N-acetylglucosamine biosynthetic process"/>
    <property type="evidence" value="ECO:0007669"/>
    <property type="project" value="TreeGrafter"/>
</dbReference>
<dbReference type="CDD" id="cd05802">
    <property type="entry name" value="GlmM"/>
    <property type="match status" value="1"/>
</dbReference>
<dbReference type="FunFam" id="3.40.120.10:FF:000001">
    <property type="entry name" value="Phosphoglucosamine mutase"/>
    <property type="match status" value="1"/>
</dbReference>
<dbReference type="FunFam" id="3.40.120.10:FF:000003">
    <property type="entry name" value="Phosphoglucosamine mutase"/>
    <property type="match status" value="1"/>
</dbReference>
<dbReference type="Gene3D" id="3.40.120.10">
    <property type="entry name" value="Alpha-D-Glucose-1,6-Bisphosphate, subunit A, domain 3"/>
    <property type="match status" value="3"/>
</dbReference>
<dbReference type="Gene3D" id="3.30.310.50">
    <property type="entry name" value="Alpha-D-phosphohexomutase, C-terminal domain"/>
    <property type="match status" value="1"/>
</dbReference>
<dbReference type="HAMAP" id="MF_01554_B">
    <property type="entry name" value="GlmM_B"/>
    <property type="match status" value="1"/>
</dbReference>
<dbReference type="InterPro" id="IPR005844">
    <property type="entry name" value="A-D-PHexomutase_a/b/a-I"/>
</dbReference>
<dbReference type="InterPro" id="IPR016055">
    <property type="entry name" value="A-D-PHexomutase_a/b/a-I/II/III"/>
</dbReference>
<dbReference type="InterPro" id="IPR005845">
    <property type="entry name" value="A-D-PHexomutase_a/b/a-II"/>
</dbReference>
<dbReference type="InterPro" id="IPR005846">
    <property type="entry name" value="A-D-PHexomutase_a/b/a-III"/>
</dbReference>
<dbReference type="InterPro" id="IPR005843">
    <property type="entry name" value="A-D-PHexomutase_C"/>
</dbReference>
<dbReference type="InterPro" id="IPR036900">
    <property type="entry name" value="A-D-PHexomutase_C_sf"/>
</dbReference>
<dbReference type="InterPro" id="IPR016066">
    <property type="entry name" value="A-D-PHexomutase_CS"/>
</dbReference>
<dbReference type="InterPro" id="IPR005841">
    <property type="entry name" value="Alpha-D-phosphohexomutase_SF"/>
</dbReference>
<dbReference type="InterPro" id="IPR006352">
    <property type="entry name" value="GlmM_bact"/>
</dbReference>
<dbReference type="InterPro" id="IPR050060">
    <property type="entry name" value="Phosphoglucosamine_mutase"/>
</dbReference>
<dbReference type="NCBIfam" id="TIGR01455">
    <property type="entry name" value="glmM"/>
    <property type="match status" value="1"/>
</dbReference>
<dbReference type="PANTHER" id="PTHR42946:SF1">
    <property type="entry name" value="PHOSPHOGLUCOMUTASE (ALPHA-D-GLUCOSE-1,6-BISPHOSPHATE-DEPENDENT)"/>
    <property type="match status" value="1"/>
</dbReference>
<dbReference type="PANTHER" id="PTHR42946">
    <property type="entry name" value="PHOSPHOHEXOSE MUTASE"/>
    <property type="match status" value="1"/>
</dbReference>
<dbReference type="Pfam" id="PF02878">
    <property type="entry name" value="PGM_PMM_I"/>
    <property type="match status" value="1"/>
</dbReference>
<dbReference type="Pfam" id="PF02879">
    <property type="entry name" value="PGM_PMM_II"/>
    <property type="match status" value="1"/>
</dbReference>
<dbReference type="Pfam" id="PF02880">
    <property type="entry name" value="PGM_PMM_III"/>
    <property type="match status" value="1"/>
</dbReference>
<dbReference type="Pfam" id="PF00408">
    <property type="entry name" value="PGM_PMM_IV"/>
    <property type="match status" value="1"/>
</dbReference>
<dbReference type="PRINTS" id="PR00509">
    <property type="entry name" value="PGMPMM"/>
</dbReference>
<dbReference type="SUPFAM" id="SSF55957">
    <property type="entry name" value="Phosphoglucomutase, C-terminal domain"/>
    <property type="match status" value="1"/>
</dbReference>
<dbReference type="SUPFAM" id="SSF53738">
    <property type="entry name" value="Phosphoglucomutase, first 3 domains"/>
    <property type="match status" value="3"/>
</dbReference>
<dbReference type="PROSITE" id="PS00710">
    <property type="entry name" value="PGM_PMM"/>
    <property type="match status" value="1"/>
</dbReference>
<gene>
    <name evidence="1" type="primary">glmM</name>
    <name type="ordered locus">CHAB381_1789</name>
</gene>
<feature type="chain" id="PRO_1000068896" description="Phosphoglucosamine mutase">
    <location>
        <begin position="1"/>
        <end position="446"/>
    </location>
</feature>
<feature type="active site" description="Phosphoserine intermediate" evidence="1">
    <location>
        <position position="99"/>
    </location>
</feature>
<feature type="binding site" description="via phosphate group" evidence="1">
    <location>
        <position position="99"/>
    </location>
    <ligand>
        <name>Mg(2+)</name>
        <dbReference type="ChEBI" id="CHEBI:18420"/>
    </ligand>
</feature>
<feature type="binding site" evidence="1">
    <location>
        <position position="242"/>
    </location>
    <ligand>
        <name>Mg(2+)</name>
        <dbReference type="ChEBI" id="CHEBI:18420"/>
    </ligand>
</feature>
<feature type="binding site" evidence="1">
    <location>
        <position position="244"/>
    </location>
    <ligand>
        <name>Mg(2+)</name>
        <dbReference type="ChEBI" id="CHEBI:18420"/>
    </ligand>
</feature>
<feature type="binding site" evidence="1">
    <location>
        <position position="246"/>
    </location>
    <ligand>
        <name>Mg(2+)</name>
        <dbReference type="ChEBI" id="CHEBI:18420"/>
    </ligand>
</feature>
<feature type="modified residue" description="Phosphoserine" evidence="1">
    <location>
        <position position="99"/>
    </location>
</feature>
<reference key="1">
    <citation type="submission" date="2007-07" db="EMBL/GenBank/DDBJ databases">
        <title>Complete genome sequence of Campylobacter hominis ATCC BAA-381, a commensal isolated from the human gastrointestinal tract.</title>
        <authorList>
            <person name="Fouts D.E."/>
            <person name="Mongodin E.F."/>
            <person name="Puiu D."/>
            <person name="Sebastian Y."/>
            <person name="Miller W.G."/>
            <person name="Mandrell R.E."/>
            <person name="Nelson K.E."/>
        </authorList>
    </citation>
    <scope>NUCLEOTIDE SEQUENCE [LARGE SCALE GENOMIC DNA]</scope>
    <source>
        <strain>ATCC BAA-381 / DSM 21671 / CCUG 45161 / LMG 19568 / NCTC 13146 / CH001A</strain>
    </source>
</reference>
<accession>A7I458</accession>
<protein>
    <recommendedName>
        <fullName evidence="1">Phosphoglucosamine mutase</fullName>
        <ecNumber evidence="1">5.4.2.10</ecNumber>
    </recommendedName>
</protein>
<name>GLMM_CAMHC</name>
<organism>
    <name type="scientific">Campylobacter hominis (strain ATCC BAA-381 / DSM 21671 / CCUG 45161 / LMG 19568 / NCTC 13146 / CH001A)</name>
    <dbReference type="NCBI Taxonomy" id="360107"/>
    <lineage>
        <taxon>Bacteria</taxon>
        <taxon>Pseudomonadati</taxon>
        <taxon>Campylobacterota</taxon>
        <taxon>Epsilonproteobacteria</taxon>
        <taxon>Campylobacterales</taxon>
        <taxon>Campylobacteraceae</taxon>
        <taxon>Campylobacter</taxon>
    </lineage>
</organism>
<comment type="function">
    <text evidence="1">Catalyzes the conversion of glucosamine-6-phosphate to glucosamine-1-phosphate.</text>
</comment>
<comment type="catalytic activity">
    <reaction evidence="1">
        <text>alpha-D-glucosamine 1-phosphate = D-glucosamine 6-phosphate</text>
        <dbReference type="Rhea" id="RHEA:23424"/>
        <dbReference type="ChEBI" id="CHEBI:58516"/>
        <dbReference type="ChEBI" id="CHEBI:58725"/>
        <dbReference type="EC" id="5.4.2.10"/>
    </reaction>
</comment>
<comment type="cofactor">
    <cofactor evidence="1">
        <name>Mg(2+)</name>
        <dbReference type="ChEBI" id="CHEBI:18420"/>
    </cofactor>
    <text evidence="1">Binds 1 Mg(2+) ion per subunit.</text>
</comment>
<comment type="PTM">
    <text evidence="1">Activated by phosphorylation.</text>
</comment>
<comment type="similarity">
    <text evidence="1">Belongs to the phosphohexose mutase family.</text>
</comment>